<name>CER1_XENTR</name>
<gene>
    <name evidence="8" type="primary">cer1</name>
    <name type="ORF">TGas102k04.1</name>
</gene>
<sequence length="276" mass="31244">MLLCVLKIYIIFCLVNDGAGKRSEVRGRTKTYSHNSRGYFRKERGMGKNKILLVNTKGFDQPHIGQGSFGLVAELFDSTRTDTSRKEPDINKVKLFSTAAHANKSSRNIGIFRRKAFNGSRRNIFSRQPFNKRNTDVTEKPGAKMFWNNFLVKMNGAPQNTSHGGKPQEIMKEACKTLPFTQNIVHENCDRMVIQNNLCFGKCISLHVPNQQDRRNTCAHCLPSKFTLNHLALNCTGSNNVVKVVMMVEECACEAHKNNYHQTAQFNMDASTTLHN</sequence>
<dbReference type="EMBL" id="AY157640">
    <property type="protein sequence ID" value="AAN76334.1"/>
    <property type="molecule type" value="mRNA"/>
</dbReference>
<dbReference type="EMBL" id="CR762343">
    <property type="protein sequence ID" value="CAL49333.1"/>
    <property type="molecule type" value="mRNA"/>
</dbReference>
<dbReference type="RefSeq" id="NP_988846.1">
    <property type="nucleotide sequence ID" value="NM_203515.1"/>
</dbReference>
<dbReference type="STRING" id="8364.ENSXETP00000044086"/>
<dbReference type="GlyCosmos" id="Q07G34">
    <property type="glycosylation" value="4 sites, No reported glycans"/>
</dbReference>
<dbReference type="GeneID" id="394437"/>
<dbReference type="KEGG" id="xtr:394437"/>
<dbReference type="AGR" id="Xenbase:XB-GENE-484971"/>
<dbReference type="CTD" id="9350"/>
<dbReference type="Xenbase" id="XB-GENE-484971">
    <property type="gene designation" value="cer1"/>
</dbReference>
<dbReference type="InParanoid" id="Q07G34"/>
<dbReference type="OrthoDB" id="9950584at2759"/>
<dbReference type="Reactome" id="R-XTR-201451">
    <property type="pathway name" value="Signaling by BMP"/>
</dbReference>
<dbReference type="Proteomes" id="UP000008143">
    <property type="component" value="Chromosome 1"/>
</dbReference>
<dbReference type="Bgee" id="ENSXETG00000038419">
    <property type="expression patterns" value="Expressed in gastrula and 3 other cell types or tissues"/>
</dbReference>
<dbReference type="GO" id="GO:0005576">
    <property type="term" value="C:extracellular region"/>
    <property type="evidence" value="ECO:0000250"/>
    <property type="project" value="UniProtKB"/>
</dbReference>
<dbReference type="GO" id="GO:0017147">
    <property type="term" value="F:Wnt-protein binding"/>
    <property type="evidence" value="ECO:0000250"/>
    <property type="project" value="UniProtKB"/>
</dbReference>
<dbReference type="GO" id="GO:0009948">
    <property type="term" value="P:anterior/posterior axis specification"/>
    <property type="evidence" value="ECO:0000250"/>
    <property type="project" value="UniProtKB"/>
</dbReference>
<dbReference type="GO" id="GO:0030154">
    <property type="term" value="P:cell differentiation"/>
    <property type="evidence" value="ECO:0007669"/>
    <property type="project" value="UniProtKB-KW"/>
</dbReference>
<dbReference type="GO" id="GO:0007166">
    <property type="term" value="P:cell surface receptor signaling pathway"/>
    <property type="evidence" value="ECO:0000250"/>
    <property type="project" value="UniProtKB"/>
</dbReference>
<dbReference type="GO" id="GO:0007507">
    <property type="term" value="P:heart development"/>
    <property type="evidence" value="ECO:0000250"/>
    <property type="project" value="UniProtKB"/>
</dbReference>
<dbReference type="GO" id="GO:0032926">
    <property type="term" value="P:negative regulation of activin receptor signaling pathway"/>
    <property type="evidence" value="ECO:0007669"/>
    <property type="project" value="UniProtKB-ARBA"/>
</dbReference>
<dbReference type="GO" id="GO:0030514">
    <property type="term" value="P:negative regulation of BMP signaling pathway"/>
    <property type="evidence" value="ECO:0000250"/>
    <property type="project" value="UniProtKB"/>
</dbReference>
<dbReference type="GO" id="GO:0030178">
    <property type="term" value="P:negative regulation of Wnt signaling pathway"/>
    <property type="evidence" value="ECO:0000250"/>
    <property type="project" value="UniProtKB"/>
</dbReference>
<dbReference type="GO" id="GO:0007399">
    <property type="term" value="P:nervous system development"/>
    <property type="evidence" value="ECO:0000250"/>
    <property type="project" value="UniProtKB"/>
</dbReference>
<dbReference type="GO" id="GO:0016055">
    <property type="term" value="P:Wnt signaling pathway"/>
    <property type="evidence" value="ECO:0007669"/>
    <property type="project" value="UniProtKB-KW"/>
</dbReference>
<dbReference type="Gene3D" id="2.10.90.10">
    <property type="entry name" value="Cystine-knot cytokines"/>
    <property type="match status" value="1"/>
</dbReference>
<dbReference type="InterPro" id="IPR016860">
    <property type="entry name" value="Cerberus"/>
</dbReference>
<dbReference type="InterPro" id="IPR006207">
    <property type="entry name" value="Cys_knot_C"/>
</dbReference>
<dbReference type="InterPro" id="IPR029034">
    <property type="entry name" value="Cystine-knot_cytokine"/>
</dbReference>
<dbReference type="InterPro" id="IPR004133">
    <property type="entry name" value="DAN"/>
</dbReference>
<dbReference type="PANTHER" id="PTHR15273:SF7">
    <property type="entry name" value="CERBERUS"/>
    <property type="match status" value="1"/>
</dbReference>
<dbReference type="PANTHER" id="PTHR15273">
    <property type="entry name" value="DAN DOMAIN FAMILY MEMBER 5"/>
    <property type="match status" value="1"/>
</dbReference>
<dbReference type="Pfam" id="PF03045">
    <property type="entry name" value="DAN"/>
    <property type="match status" value="1"/>
</dbReference>
<dbReference type="SMART" id="SM00041">
    <property type="entry name" value="CT"/>
    <property type="match status" value="1"/>
</dbReference>
<dbReference type="PROSITE" id="PS01225">
    <property type="entry name" value="CTCK_2"/>
    <property type="match status" value="1"/>
</dbReference>
<keyword id="KW-0217">Developmental protein</keyword>
<keyword id="KW-0221">Differentiation</keyword>
<keyword id="KW-1015">Disulfide bond</keyword>
<keyword id="KW-0325">Glycoprotein</keyword>
<keyword id="KW-0524">Neurogenesis</keyword>
<keyword id="KW-1185">Reference proteome</keyword>
<keyword id="KW-0964">Secreted</keyword>
<keyword id="KW-0732">Signal</keyword>
<keyword id="KW-0879">Wnt signaling pathway</keyword>
<comment type="function">
    <text evidence="2">Inhibits wnt, nodal/nr-1 and bmp signaling in the embryo to promote head formation and anterior neural induction. Within the endoderm, acts as an essential mediator of nodal/nr-1-induced cardiogenesis in the overlying mesoderm (By similarity).</text>
</comment>
<comment type="subunit">
    <text evidence="2">The long chain interacts with nodal/nr-1, bmp4 and wnt8, thereby inhibiting their function. The short chain interacts with nodal/nr-1 but not bmp4 or wnt8 (By similarity).</text>
</comment>
<comment type="subcellular location">
    <subcellularLocation>
        <location evidence="1">Secreted</location>
    </subcellularLocation>
</comment>
<comment type="tissue specificity">
    <text evidence="5">Expressed in the anterior endomesoderm of the early gastrula with expression expanded laterally around the margin at the endoderm/mesoderm boundary.</text>
</comment>
<comment type="developmental stage">
    <text evidence="5">Expressed in the gastrula stage of embryos but becomes absent by late neurula stage.</text>
</comment>
<comment type="similarity">
    <text evidence="3">Belongs to the DAN family.</text>
</comment>
<organism>
    <name type="scientific">Xenopus tropicalis</name>
    <name type="common">Western clawed frog</name>
    <name type="synonym">Silurana tropicalis</name>
    <dbReference type="NCBI Taxonomy" id="8364"/>
    <lineage>
        <taxon>Eukaryota</taxon>
        <taxon>Metazoa</taxon>
        <taxon>Chordata</taxon>
        <taxon>Craniata</taxon>
        <taxon>Vertebrata</taxon>
        <taxon>Euteleostomi</taxon>
        <taxon>Amphibia</taxon>
        <taxon>Batrachia</taxon>
        <taxon>Anura</taxon>
        <taxon>Pipoidea</taxon>
        <taxon>Pipidae</taxon>
        <taxon>Xenopodinae</taxon>
        <taxon>Xenopus</taxon>
        <taxon>Silurana</taxon>
    </lineage>
</organism>
<proteinExistence type="evidence at transcript level"/>
<evidence type="ECO:0000250" key="1"/>
<evidence type="ECO:0000250" key="2">
    <source>
        <dbReference type="UniProtKB" id="P70041"/>
    </source>
</evidence>
<evidence type="ECO:0000255" key="3"/>
<evidence type="ECO:0000255" key="4">
    <source>
        <dbReference type="PROSITE-ProRule" id="PRU00039"/>
    </source>
</evidence>
<evidence type="ECO:0000269" key="5">
    <source>
    </source>
</evidence>
<evidence type="ECO:0000305" key="6"/>
<evidence type="ECO:0000312" key="7">
    <source>
        <dbReference type="EMBL" id="AAN76334.1"/>
    </source>
</evidence>
<evidence type="ECO:0000312" key="8">
    <source>
        <dbReference type="EMBL" id="CAL49333.1"/>
    </source>
</evidence>
<feature type="signal peptide" evidence="3">
    <location>
        <begin position="1"/>
        <end position="20"/>
    </location>
</feature>
<feature type="chain" id="PRO_0000273283" description="Cerberus long">
    <location>
        <begin position="21"/>
        <end position="276"/>
    </location>
</feature>
<feature type="chain" id="PRO_0000273284" description="Cerberus short" evidence="1">
    <location>
        <begin position="110"/>
        <end position="270"/>
    </location>
</feature>
<feature type="domain" description="CTCK" evidence="4">
    <location>
        <begin position="175"/>
        <end position="259"/>
    </location>
</feature>
<feature type="glycosylation site" description="N-linked (GlcNAc...) asparagine" evidence="3">
    <location>
        <position position="103"/>
    </location>
</feature>
<feature type="glycosylation site" description="N-linked (GlcNAc...) asparagine" evidence="3">
    <location>
        <position position="118"/>
    </location>
</feature>
<feature type="glycosylation site" description="N-linked (GlcNAc...) asparagine" evidence="3">
    <location>
        <position position="160"/>
    </location>
</feature>
<feature type="glycosylation site" description="N-linked (GlcNAc...) asparagine" evidence="3">
    <location>
        <position position="234"/>
    </location>
</feature>
<feature type="disulfide bond" evidence="4">
    <location>
        <begin position="175"/>
        <end position="221"/>
    </location>
</feature>
<feature type="disulfide bond" evidence="4">
    <location>
        <begin position="189"/>
        <end position="235"/>
    </location>
</feature>
<feature type="disulfide bond" evidence="4">
    <location>
        <begin position="199"/>
        <end position="251"/>
    </location>
</feature>
<feature type="disulfide bond" evidence="4">
    <location>
        <begin position="203"/>
        <end position="253"/>
    </location>
</feature>
<feature type="sequence conflict" description="In Ref. 1; AAN76334." evidence="6" ref="1">
    <original>L</original>
    <variation>V</variation>
    <location>
        <position position="53"/>
    </location>
</feature>
<reference evidence="6 7" key="1">
    <citation type="journal article" date="2003" name="Dev. Dyn.">
        <title>Molecular components of the endoderm specification pathway in Xenopus tropicalis.</title>
        <authorList>
            <person name="D'Souza A."/>
            <person name="Lee M."/>
            <person name="Taverner N."/>
            <person name="Mason J."/>
            <person name="Carruthers S."/>
            <person name="Smith J.C."/>
            <person name="Amaya E."/>
            <person name="Papalopulu N."/>
            <person name="Zorn A.M."/>
        </authorList>
    </citation>
    <scope>NUCLEOTIDE SEQUENCE [MRNA]</scope>
    <scope>TISSUE SPECIFICITY</scope>
    <scope>DEVELOPMENTAL STAGE</scope>
    <source>
        <tissue evidence="5">Gastrula</tissue>
    </source>
</reference>
<reference evidence="8" key="2">
    <citation type="submission" date="2006-10" db="EMBL/GenBank/DDBJ databases">
        <authorList>
            <consortium name="Sanger Xenopus tropicalis EST/cDNA project"/>
        </authorList>
    </citation>
    <scope>NUCLEOTIDE SEQUENCE [LARGE SCALE MRNA]</scope>
    <source>
        <tissue evidence="8">Gastrula</tissue>
    </source>
</reference>
<accession>Q07G34</accession>
<accession>Q8AWG8</accession>
<protein>
    <recommendedName>
        <fullName>Cerberus</fullName>
        <shortName>Cer</shortName>
    </recommendedName>
    <alternativeName>
        <fullName>tCerberus</fullName>
    </alternativeName>
    <component>
        <recommendedName>
            <fullName>Cerberus long</fullName>
            <shortName>Cer-L</shortName>
        </recommendedName>
    </component>
    <component>
        <recommendedName>
            <fullName>Cerberus short</fullName>
            <shortName>Cer-S</shortName>
        </recommendedName>
    </component>
</protein>